<feature type="chain" id="PRO_1000199311" description="Phenylalanine--tRNA ligase alpha subunit">
    <location>
        <begin position="1"/>
        <end position="338"/>
    </location>
</feature>
<feature type="binding site" evidence="1">
    <location>
        <position position="253"/>
    </location>
    <ligand>
        <name>Mg(2+)</name>
        <dbReference type="ChEBI" id="CHEBI:18420"/>
        <note>shared with beta subunit</note>
    </ligand>
</feature>
<gene>
    <name evidence="1" type="primary">pheS</name>
    <name type="ordered locus">Geob_3361</name>
</gene>
<comment type="catalytic activity">
    <reaction evidence="1">
        <text>tRNA(Phe) + L-phenylalanine + ATP = L-phenylalanyl-tRNA(Phe) + AMP + diphosphate + H(+)</text>
        <dbReference type="Rhea" id="RHEA:19413"/>
        <dbReference type="Rhea" id="RHEA-COMP:9668"/>
        <dbReference type="Rhea" id="RHEA-COMP:9699"/>
        <dbReference type="ChEBI" id="CHEBI:15378"/>
        <dbReference type="ChEBI" id="CHEBI:30616"/>
        <dbReference type="ChEBI" id="CHEBI:33019"/>
        <dbReference type="ChEBI" id="CHEBI:58095"/>
        <dbReference type="ChEBI" id="CHEBI:78442"/>
        <dbReference type="ChEBI" id="CHEBI:78531"/>
        <dbReference type="ChEBI" id="CHEBI:456215"/>
        <dbReference type="EC" id="6.1.1.20"/>
    </reaction>
</comment>
<comment type="cofactor">
    <cofactor evidence="1">
        <name>Mg(2+)</name>
        <dbReference type="ChEBI" id="CHEBI:18420"/>
    </cofactor>
    <text evidence="1">Binds 2 magnesium ions per tetramer.</text>
</comment>
<comment type="subunit">
    <text evidence="1">Tetramer of two alpha and two beta subunits.</text>
</comment>
<comment type="subcellular location">
    <subcellularLocation>
        <location evidence="1">Cytoplasm</location>
    </subcellularLocation>
</comment>
<comment type="similarity">
    <text evidence="1">Belongs to the class-II aminoacyl-tRNA synthetase family. Phe-tRNA synthetase alpha subunit type 1 subfamily.</text>
</comment>
<organism>
    <name type="scientific">Geotalea daltonii (strain DSM 22248 / JCM 15807 / FRC-32)</name>
    <name type="common">Geobacter daltonii</name>
    <dbReference type="NCBI Taxonomy" id="316067"/>
    <lineage>
        <taxon>Bacteria</taxon>
        <taxon>Pseudomonadati</taxon>
        <taxon>Thermodesulfobacteriota</taxon>
        <taxon>Desulfuromonadia</taxon>
        <taxon>Geobacterales</taxon>
        <taxon>Geobacteraceae</taxon>
        <taxon>Geotalea</taxon>
    </lineage>
</organism>
<sequence>MREKLEALLSAATAELAHVATEDSLQDLRVKYLGKKGELTAVMKGLGSLSSEERPLIGQIVNKVKTELETRIDAAALQIREAGKAEKLRSERVDVTLPGRRLPVGTRHPITLITEEISDIFAGLGFLVAEGPEIEHDFYNFEALNFPKDHPARDMQDTFFISDTLLLRTHTSPVQVRTMLKQPPPVRIIAPGTVYRCDSDATHSPMFHQIEGLMVDKGITFGDLKGILTNFINQLFGKDTGVRLRPSFFPFTEPSAEVDIACVICKGKGCRVCKNTGWLEILGAGMVDPEVYRHVNYDAEAYTGFAFGMGIERIAMLKYGISDMRLLFENDLRFLKQF</sequence>
<proteinExistence type="inferred from homology"/>
<evidence type="ECO:0000255" key="1">
    <source>
        <dbReference type="HAMAP-Rule" id="MF_00281"/>
    </source>
</evidence>
<accession>B9M520</accession>
<name>SYFA_GEODF</name>
<reference key="1">
    <citation type="submission" date="2009-01" db="EMBL/GenBank/DDBJ databases">
        <title>Complete sequence of Geobacter sp. FRC-32.</title>
        <authorList>
            <consortium name="US DOE Joint Genome Institute"/>
            <person name="Lucas S."/>
            <person name="Copeland A."/>
            <person name="Lapidus A."/>
            <person name="Glavina del Rio T."/>
            <person name="Dalin E."/>
            <person name="Tice H."/>
            <person name="Bruce D."/>
            <person name="Goodwin L."/>
            <person name="Pitluck S."/>
            <person name="Saunders E."/>
            <person name="Brettin T."/>
            <person name="Detter J.C."/>
            <person name="Han C."/>
            <person name="Larimer F."/>
            <person name="Land M."/>
            <person name="Hauser L."/>
            <person name="Kyrpides N."/>
            <person name="Ovchinnikova G."/>
            <person name="Kostka J."/>
            <person name="Richardson P."/>
        </authorList>
    </citation>
    <scope>NUCLEOTIDE SEQUENCE [LARGE SCALE GENOMIC DNA]</scope>
    <source>
        <strain>DSM 22248 / JCM 15807 / FRC-32</strain>
    </source>
</reference>
<protein>
    <recommendedName>
        <fullName evidence="1">Phenylalanine--tRNA ligase alpha subunit</fullName>
        <ecNumber evidence="1">6.1.1.20</ecNumber>
    </recommendedName>
    <alternativeName>
        <fullName evidence="1">Phenylalanyl-tRNA synthetase alpha subunit</fullName>
        <shortName evidence="1">PheRS</shortName>
    </alternativeName>
</protein>
<dbReference type="EC" id="6.1.1.20" evidence="1"/>
<dbReference type="EMBL" id="CP001390">
    <property type="protein sequence ID" value="ACM21704.1"/>
    <property type="molecule type" value="Genomic_DNA"/>
</dbReference>
<dbReference type="RefSeq" id="WP_012648432.1">
    <property type="nucleotide sequence ID" value="NC_011979.1"/>
</dbReference>
<dbReference type="SMR" id="B9M520"/>
<dbReference type="STRING" id="316067.Geob_3361"/>
<dbReference type="KEGG" id="geo:Geob_3361"/>
<dbReference type="eggNOG" id="COG0016">
    <property type="taxonomic scope" value="Bacteria"/>
</dbReference>
<dbReference type="HOGENOM" id="CLU_025086_0_1_7"/>
<dbReference type="OrthoDB" id="9800719at2"/>
<dbReference type="Proteomes" id="UP000007721">
    <property type="component" value="Chromosome"/>
</dbReference>
<dbReference type="GO" id="GO:0005737">
    <property type="term" value="C:cytoplasm"/>
    <property type="evidence" value="ECO:0007669"/>
    <property type="project" value="UniProtKB-SubCell"/>
</dbReference>
<dbReference type="GO" id="GO:0005524">
    <property type="term" value="F:ATP binding"/>
    <property type="evidence" value="ECO:0007669"/>
    <property type="project" value="UniProtKB-UniRule"/>
</dbReference>
<dbReference type="GO" id="GO:0000287">
    <property type="term" value="F:magnesium ion binding"/>
    <property type="evidence" value="ECO:0007669"/>
    <property type="project" value="UniProtKB-UniRule"/>
</dbReference>
<dbReference type="GO" id="GO:0004826">
    <property type="term" value="F:phenylalanine-tRNA ligase activity"/>
    <property type="evidence" value="ECO:0007669"/>
    <property type="project" value="UniProtKB-UniRule"/>
</dbReference>
<dbReference type="GO" id="GO:0000049">
    <property type="term" value="F:tRNA binding"/>
    <property type="evidence" value="ECO:0007669"/>
    <property type="project" value="InterPro"/>
</dbReference>
<dbReference type="GO" id="GO:0006432">
    <property type="term" value="P:phenylalanyl-tRNA aminoacylation"/>
    <property type="evidence" value="ECO:0007669"/>
    <property type="project" value="UniProtKB-UniRule"/>
</dbReference>
<dbReference type="CDD" id="cd00496">
    <property type="entry name" value="PheRS_alpha_core"/>
    <property type="match status" value="1"/>
</dbReference>
<dbReference type="FunFam" id="3.30.930.10:FF:000003">
    <property type="entry name" value="Phenylalanine--tRNA ligase alpha subunit"/>
    <property type="match status" value="1"/>
</dbReference>
<dbReference type="Gene3D" id="3.30.930.10">
    <property type="entry name" value="Bira Bifunctional Protein, Domain 2"/>
    <property type="match status" value="1"/>
</dbReference>
<dbReference type="HAMAP" id="MF_00281">
    <property type="entry name" value="Phe_tRNA_synth_alpha1"/>
    <property type="match status" value="1"/>
</dbReference>
<dbReference type="InterPro" id="IPR006195">
    <property type="entry name" value="aa-tRNA-synth_II"/>
</dbReference>
<dbReference type="InterPro" id="IPR045864">
    <property type="entry name" value="aa-tRNA-synth_II/BPL/LPL"/>
</dbReference>
<dbReference type="InterPro" id="IPR004529">
    <property type="entry name" value="Phe-tRNA-synth_IIc_asu"/>
</dbReference>
<dbReference type="InterPro" id="IPR004188">
    <property type="entry name" value="Phe-tRNA_ligase_II_N"/>
</dbReference>
<dbReference type="InterPro" id="IPR022911">
    <property type="entry name" value="Phe_tRNA_ligase_alpha1_bac"/>
</dbReference>
<dbReference type="InterPro" id="IPR002319">
    <property type="entry name" value="Phenylalanyl-tRNA_Synthase"/>
</dbReference>
<dbReference type="InterPro" id="IPR010978">
    <property type="entry name" value="tRNA-bd_arm"/>
</dbReference>
<dbReference type="NCBIfam" id="TIGR00468">
    <property type="entry name" value="pheS"/>
    <property type="match status" value="1"/>
</dbReference>
<dbReference type="PANTHER" id="PTHR11538:SF41">
    <property type="entry name" value="PHENYLALANINE--TRNA LIGASE, MITOCHONDRIAL"/>
    <property type="match status" value="1"/>
</dbReference>
<dbReference type="PANTHER" id="PTHR11538">
    <property type="entry name" value="PHENYLALANYL-TRNA SYNTHETASE"/>
    <property type="match status" value="1"/>
</dbReference>
<dbReference type="Pfam" id="PF02912">
    <property type="entry name" value="Phe_tRNA-synt_N"/>
    <property type="match status" value="1"/>
</dbReference>
<dbReference type="Pfam" id="PF01409">
    <property type="entry name" value="tRNA-synt_2d"/>
    <property type="match status" value="1"/>
</dbReference>
<dbReference type="SUPFAM" id="SSF55681">
    <property type="entry name" value="Class II aaRS and biotin synthetases"/>
    <property type="match status" value="1"/>
</dbReference>
<dbReference type="SUPFAM" id="SSF46589">
    <property type="entry name" value="tRNA-binding arm"/>
    <property type="match status" value="1"/>
</dbReference>
<dbReference type="PROSITE" id="PS50862">
    <property type="entry name" value="AA_TRNA_LIGASE_II"/>
    <property type="match status" value="1"/>
</dbReference>
<keyword id="KW-0030">Aminoacyl-tRNA synthetase</keyword>
<keyword id="KW-0067">ATP-binding</keyword>
<keyword id="KW-0963">Cytoplasm</keyword>
<keyword id="KW-0436">Ligase</keyword>
<keyword id="KW-0460">Magnesium</keyword>
<keyword id="KW-0479">Metal-binding</keyword>
<keyword id="KW-0547">Nucleotide-binding</keyword>
<keyword id="KW-0648">Protein biosynthesis</keyword>
<keyword id="KW-1185">Reference proteome</keyword>